<organism>
    <name type="scientific">Saccharomyces cerevisiae (strain ATCC 204508 / S288c)</name>
    <name type="common">Baker's yeast</name>
    <dbReference type="NCBI Taxonomy" id="559292"/>
    <lineage>
        <taxon>Eukaryota</taxon>
        <taxon>Fungi</taxon>
        <taxon>Dikarya</taxon>
        <taxon>Ascomycota</taxon>
        <taxon>Saccharomycotina</taxon>
        <taxon>Saccharomycetes</taxon>
        <taxon>Saccharomycetales</taxon>
        <taxon>Saccharomycetaceae</taxon>
        <taxon>Saccharomyces</taxon>
    </lineage>
</organism>
<sequence>MPLRNLTETHNFSSTNLDTDGTGDDHDGAPLSSSPSFGQQNDNSTNDNAGLTNPFMGSDEESNARDGESLSSSVHYQPQGSDSSLLHDNSRLDLSQNKGVSDYKGYYSRNNSRAVSTANDNSFLQPPHRAIASSPSLNSNLSKNDILSPPEFDRYPLVGSRVTSMTQLNHHGRSPTSSPGNESSASFSSNPFLGEQDFSPFGGYPASSFPLMIDEKEEDDYLHNPDPEEEARLDRRRFIDDFKYMDKRSASGLAGVLLLFLAAIFIFIVLPALTFTGAIDHESNTEEVTYLTQYQYPQLSAIRTSLVDPDTPDTAKTREAMDGSKWELVFSDEFNAEGRTFYDGDDPYWTAPDVHYDATKDLEWYSPDASTTVNGTLQLRMDAFKNHGLYYRSGMLQSWNKVCFTQGALEISANLPNYGRVSGLWPGLWTMGNLGRPGYLASTQGVWPYSYESCDAGITPNQSSPDGISYLPGQKLSICTCDGEDHPNQGVGRGAPEIDVLEGETDTKIGVGIASQSLQIAPFDIWYMPDYDFIEVYNFTTTTMNTYAGGPFQQAVSAVSTLNVTWYEFGEYGGYFQKYAIEYLNDDDNGYIRWFVGDTPTYTIHAKALHPDGNIGWRRISKEPMSIILNLGISNNWAYIDWQYIFFPVVMSIDYVRIYQPSNAISVTCDPSDYPTYDYIQSHLNAFQNANLTTWEDAGYTFPKNILTGKCTSSKFKLSS</sequence>
<proteinExistence type="evidence at protein level"/>
<keyword id="KW-0961">Cell wall biogenesis/degradation</keyword>
<keyword id="KW-0325">Glycoprotein</keyword>
<keyword id="KW-0333">Golgi apparatus</keyword>
<keyword id="KW-0472">Membrane</keyword>
<keyword id="KW-0597">Phosphoprotein</keyword>
<keyword id="KW-1185">Reference proteome</keyword>
<keyword id="KW-0735">Signal-anchor</keyword>
<keyword id="KW-0812">Transmembrane</keyword>
<keyword id="KW-1133">Transmembrane helix</keyword>
<comment type="function">
    <text evidence="4 5 7">Involved in the synthesis of (1-&gt;6)- and (1-&gt;3)-beta-D-glucan polymers of the yeast cell wall in vivo. It is required for full activity of beta-glucan synthase in vitro. May be involved in the maturation and transport of cell wall proteins (CWP) to the cell wall. May act as a transglucosidase and contribute to the construction of a protein-bound glucan-structure that acts as an acceptor site for the addition of (1-&gt;6)-beta-D-glucan at the cell surface.</text>
</comment>
<comment type="subunit">
    <text evidence="5 8">The cytoplasmic domain interacts with the actin patch assembly proteins LAS17 and SLA1. Interacts with KEG1.</text>
</comment>
<comment type="subcellular location">
    <subcellularLocation>
        <location evidence="5">Golgi apparatus membrane</location>
        <topology evidence="5">Single-pass type II membrane protein</topology>
    </subcellularLocation>
</comment>
<comment type="miscellaneous">
    <text evidence="6">Present with 4760 molecules/cell in log phase SD medium.</text>
</comment>
<comment type="similarity">
    <text evidence="9">Belongs to the SKN1/KRE6 family.</text>
</comment>
<accession>P32486</accession>
<accession>D6W4F9</accession>
<accession>Q06472</accession>
<dbReference type="EMBL" id="M80657">
    <property type="protein sequence ID" value="AAA34726.1"/>
    <property type="molecule type" value="Genomic_DNA"/>
</dbReference>
<dbReference type="EMBL" id="L33835">
    <property type="protein sequence ID" value="AAB59312.1"/>
    <property type="molecule type" value="Genomic_DNA"/>
</dbReference>
<dbReference type="EMBL" id="U28371">
    <property type="protein sequence ID" value="AAB68056.1"/>
    <property type="molecule type" value="Genomic_DNA"/>
</dbReference>
<dbReference type="EMBL" id="BK006949">
    <property type="protein sequence ID" value="DAA11575.1"/>
    <property type="molecule type" value="Genomic_DNA"/>
</dbReference>
<dbReference type="PIR" id="S61143">
    <property type="entry name" value="S61143"/>
</dbReference>
<dbReference type="RefSeq" id="NP_015485.1">
    <property type="nucleotide sequence ID" value="NM_001184256.1"/>
</dbReference>
<dbReference type="BioGRID" id="36331">
    <property type="interactions" value="105"/>
</dbReference>
<dbReference type="DIP" id="DIP-1850N"/>
<dbReference type="FunCoup" id="P32486">
    <property type="interactions" value="231"/>
</dbReference>
<dbReference type="IntAct" id="P32486">
    <property type="interactions" value="22"/>
</dbReference>
<dbReference type="MINT" id="P32486"/>
<dbReference type="STRING" id="4932.YPR159W"/>
<dbReference type="CAZy" id="GH16">
    <property type="family name" value="Glycoside Hydrolase Family 16"/>
</dbReference>
<dbReference type="GlyCosmos" id="P32486">
    <property type="glycosylation" value="5 sites, No reported glycans"/>
</dbReference>
<dbReference type="GlyGen" id="P32486">
    <property type="glycosylation" value="5 sites"/>
</dbReference>
<dbReference type="iPTMnet" id="P32486"/>
<dbReference type="PaxDb" id="4932-YPR159W"/>
<dbReference type="PeptideAtlas" id="P32486"/>
<dbReference type="EnsemblFungi" id="YPR159W_mRNA">
    <property type="protein sequence ID" value="YPR159W"/>
    <property type="gene ID" value="YPR159W"/>
</dbReference>
<dbReference type="GeneID" id="856287"/>
<dbReference type="KEGG" id="sce:YPR159W"/>
<dbReference type="AGR" id="SGD:S000006363"/>
<dbReference type="SGD" id="S000006363">
    <property type="gene designation" value="KRE6"/>
</dbReference>
<dbReference type="VEuPathDB" id="FungiDB:YPR159W"/>
<dbReference type="eggNOG" id="ENOG502QR13">
    <property type="taxonomic scope" value="Eukaryota"/>
</dbReference>
<dbReference type="GeneTree" id="ENSGT00940000176454"/>
<dbReference type="HOGENOM" id="CLU_010811_4_3_1"/>
<dbReference type="InParanoid" id="P32486"/>
<dbReference type="OMA" id="AHIEAYT"/>
<dbReference type="OrthoDB" id="412647at2759"/>
<dbReference type="BioCyc" id="YEAST:YPR159W-MONOMER"/>
<dbReference type="BioGRID-ORCS" id="856287">
    <property type="hits" value="3 hits in 10 CRISPR screens"/>
</dbReference>
<dbReference type="PRO" id="PR:P32486"/>
<dbReference type="Proteomes" id="UP000002311">
    <property type="component" value="Chromosome XVI"/>
</dbReference>
<dbReference type="RNAct" id="P32486">
    <property type="molecule type" value="protein"/>
</dbReference>
<dbReference type="GO" id="GO:0005935">
    <property type="term" value="C:cellular bud neck"/>
    <property type="evidence" value="ECO:0007005"/>
    <property type="project" value="SGD"/>
</dbReference>
<dbReference type="GO" id="GO:0005789">
    <property type="term" value="C:endoplasmic reticulum membrane"/>
    <property type="evidence" value="ECO:0000314"/>
    <property type="project" value="SGD"/>
</dbReference>
<dbReference type="GO" id="GO:0000139">
    <property type="term" value="C:Golgi membrane"/>
    <property type="evidence" value="ECO:0007669"/>
    <property type="project" value="UniProtKB-SubCell"/>
</dbReference>
<dbReference type="GO" id="GO:0016020">
    <property type="term" value="C:membrane"/>
    <property type="evidence" value="ECO:0000314"/>
    <property type="project" value="SGD"/>
</dbReference>
<dbReference type="GO" id="GO:0005886">
    <property type="term" value="C:plasma membrane"/>
    <property type="evidence" value="ECO:0000314"/>
    <property type="project" value="SGD"/>
</dbReference>
<dbReference type="GO" id="GO:0030427">
    <property type="term" value="C:site of polarized growth"/>
    <property type="evidence" value="ECO:0000314"/>
    <property type="project" value="SGD"/>
</dbReference>
<dbReference type="GO" id="GO:0030133">
    <property type="term" value="C:transport vesicle"/>
    <property type="evidence" value="ECO:0000314"/>
    <property type="project" value="SGD"/>
</dbReference>
<dbReference type="GO" id="GO:0015926">
    <property type="term" value="F:glucosidase activity"/>
    <property type="evidence" value="ECO:0000315"/>
    <property type="project" value="SGD"/>
</dbReference>
<dbReference type="GO" id="GO:0006078">
    <property type="term" value="P:(1-&gt;6)-beta-D-glucan biosynthetic process"/>
    <property type="evidence" value="ECO:0000315"/>
    <property type="project" value="SGD"/>
</dbReference>
<dbReference type="GO" id="GO:0031505">
    <property type="term" value="P:fungal-type cell wall organization"/>
    <property type="evidence" value="ECO:0000315"/>
    <property type="project" value="SGD"/>
</dbReference>
<dbReference type="CDD" id="cd02180">
    <property type="entry name" value="GH16_fungal_KRE6_glucanase"/>
    <property type="match status" value="1"/>
</dbReference>
<dbReference type="FunFam" id="2.60.120.200:FF:000140">
    <property type="entry name" value="Beta-glucan synthesis-associated protein"/>
    <property type="match status" value="1"/>
</dbReference>
<dbReference type="FunFam" id="2.60.120.200:FF:000228">
    <property type="entry name" value="Beta-glucan synthesis-associated protein KRE6"/>
    <property type="match status" value="1"/>
</dbReference>
<dbReference type="Gene3D" id="2.60.120.200">
    <property type="match status" value="2"/>
</dbReference>
<dbReference type="InterPro" id="IPR013320">
    <property type="entry name" value="ConA-like_dom_sf"/>
</dbReference>
<dbReference type="InterPro" id="IPR000757">
    <property type="entry name" value="GH16"/>
</dbReference>
<dbReference type="InterPro" id="IPR005629">
    <property type="entry name" value="Skn1/Kre6/Sbg1"/>
</dbReference>
<dbReference type="PANTHER" id="PTHR31361">
    <property type="entry name" value="BETA-GLUCAN SYNTHESIS-ASSOCIATED PROTEIN KRE6-RELATED"/>
    <property type="match status" value="1"/>
</dbReference>
<dbReference type="PANTHER" id="PTHR31361:SF1">
    <property type="entry name" value="BETA-GLUCAN SYNTHESIS-ASSOCIATED PROTEIN KRE6-RELATED"/>
    <property type="match status" value="1"/>
</dbReference>
<dbReference type="Pfam" id="PF03935">
    <property type="entry name" value="SKN1_KRE6_Sbg1"/>
    <property type="match status" value="1"/>
</dbReference>
<dbReference type="SUPFAM" id="SSF49899">
    <property type="entry name" value="Concanavalin A-like lectins/glucanases"/>
    <property type="match status" value="1"/>
</dbReference>
<dbReference type="PROSITE" id="PS51762">
    <property type="entry name" value="GH16_2"/>
    <property type="match status" value="1"/>
</dbReference>
<reference key="1">
    <citation type="journal article" date="1991" name="Proc. Natl. Acad. Sci. U.S.A.">
        <title>Yeast beta-glucan synthesis: KRE6 encodes a predicted type II membrane protein required for glucan synthesis in vivo and for glucan synthase activity in vitro.</title>
        <authorList>
            <person name="Roemer T."/>
            <person name="Bussey H."/>
        </authorList>
    </citation>
    <scope>NUCLEOTIDE SEQUENCE [GENOMIC DNA]</scope>
</reference>
<reference key="2">
    <citation type="journal article" date="1994" name="Yeast">
        <title>DNA sequence analysis of a 10.4 kbp region on the right arm of yeast chromosome XVI positions GPH1 and SGV1 adjacent to KRE6, and identifies two novel tRNA genes.</title>
        <authorList>
            <person name="Roemer T.D."/>
            <person name="Fortin N."/>
            <person name="Bussey H."/>
        </authorList>
    </citation>
    <scope>NUCLEOTIDE SEQUENCE [GENOMIC DNA]</scope>
</reference>
<reference key="3">
    <citation type="journal article" date="1997" name="Nature">
        <title>The nucleotide sequence of Saccharomyces cerevisiae chromosome XVI.</title>
        <authorList>
            <person name="Bussey H."/>
            <person name="Storms R.K."/>
            <person name="Ahmed A."/>
            <person name="Albermann K."/>
            <person name="Allen E."/>
            <person name="Ansorge W."/>
            <person name="Araujo R."/>
            <person name="Aparicio A."/>
            <person name="Barrell B.G."/>
            <person name="Badcock K."/>
            <person name="Benes V."/>
            <person name="Botstein D."/>
            <person name="Bowman S."/>
            <person name="Brueckner M."/>
            <person name="Carpenter J."/>
            <person name="Cherry J.M."/>
            <person name="Chung E."/>
            <person name="Churcher C.M."/>
            <person name="Coster F."/>
            <person name="Davis K."/>
            <person name="Davis R.W."/>
            <person name="Dietrich F.S."/>
            <person name="Delius H."/>
            <person name="DiPaolo T."/>
            <person name="Dubois E."/>
            <person name="Duesterhoeft A."/>
            <person name="Duncan M."/>
            <person name="Floeth M."/>
            <person name="Fortin N."/>
            <person name="Friesen J.D."/>
            <person name="Fritz C."/>
            <person name="Goffeau A."/>
            <person name="Hall J."/>
            <person name="Hebling U."/>
            <person name="Heumann K."/>
            <person name="Hilbert H."/>
            <person name="Hillier L.W."/>
            <person name="Hunicke-Smith S."/>
            <person name="Hyman R.W."/>
            <person name="Johnston M."/>
            <person name="Kalman S."/>
            <person name="Kleine K."/>
            <person name="Komp C."/>
            <person name="Kurdi O."/>
            <person name="Lashkari D."/>
            <person name="Lew H."/>
            <person name="Lin A."/>
            <person name="Lin D."/>
            <person name="Louis E.J."/>
            <person name="Marathe R."/>
            <person name="Messenguy F."/>
            <person name="Mewes H.-W."/>
            <person name="Mirtipati S."/>
            <person name="Moestl D."/>
            <person name="Mueller-Auer S."/>
            <person name="Namath A."/>
            <person name="Nentwich U."/>
            <person name="Oefner P."/>
            <person name="Pearson D."/>
            <person name="Petel F.X."/>
            <person name="Pohl T.M."/>
            <person name="Purnelle B."/>
            <person name="Rajandream M.A."/>
            <person name="Rechmann S."/>
            <person name="Rieger M."/>
            <person name="Riles L."/>
            <person name="Roberts D."/>
            <person name="Schaefer M."/>
            <person name="Scharfe M."/>
            <person name="Scherens B."/>
            <person name="Schramm S."/>
            <person name="Schroeder M."/>
            <person name="Sdicu A.-M."/>
            <person name="Tettelin H."/>
            <person name="Urrestarazu L.A."/>
            <person name="Ushinsky S."/>
            <person name="Vierendeels F."/>
            <person name="Vissers S."/>
            <person name="Voss H."/>
            <person name="Walsh S.V."/>
            <person name="Wambutt R."/>
            <person name="Wang Y."/>
            <person name="Wedler E."/>
            <person name="Wedler H."/>
            <person name="Winnett E."/>
            <person name="Zhong W.-W."/>
            <person name="Zollner A."/>
            <person name="Vo D.H."/>
            <person name="Hani J."/>
        </authorList>
    </citation>
    <scope>NUCLEOTIDE SEQUENCE [LARGE SCALE GENOMIC DNA]</scope>
    <source>
        <strain>ATCC 204508 / S288c</strain>
    </source>
</reference>
<reference key="4">
    <citation type="journal article" date="2014" name="G3 (Bethesda)">
        <title>The reference genome sequence of Saccharomyces cerevisiae: Then and now.</title>
        <authorList>
            <person name="Engel S.R."/>
            <person name="Dietrich F.S."/>
            <person name="Fisk D.G."/>
            <person name="Binkley G."/>
            <person name="Balakrishnan R."/>
            <person name="Costanzo M.C."/>
            <person name="Dwight S.S."/>
            <person name="Hitz B.C."/>
            <person name="Karra K."/>
            <person name="Nash R.S."/>
            <person name="Weng S."/>
            <person name="Wong E.D."/>
            <person name="Lloyd P."/>
            <person name="Skrzypek M.S."/>
            <person name="Miyasato S.R."/>
            <person name="Simison M."/>
            <person name="Cherry J.M."/>
        </authorList>
    </citation>
    <scope>GENOME REANNOTATION</scope>
    <source>
        <strain>ATCC 204508 / S288c</strain>
    </source>
</reference>
<reference key="5">
    <citation type="journal article" date="1994" name="J. Cell Biol.">
        <title>Characterization of the yeast (1--&gt;6)-beta-glucan biosynthetic components, Kre6p and Skn1p, and genetic interactions between the PKC1 pathway and extracellular matrix assembly.</title>
        <authorList>
            <person name="Roemer T."/>
            <person name="Paravicini G."/>
            <person name="Payton M.A."/>
            <person name="Bussey H."/>
        </authorList>
    </citation>
    <scope>CHARACTERIZATION</scope>
</reference>
<reference key="6">
    <citation type="journal article" date="1999" name="J. Bacteriol.">
        <title>Localization of synthesis of beta1,6-glucan in Saccharomyces cerevisiae.</title>
        <authorList>
            <person name="Montijn R.C."/>
            <person name="Vink E."/>
            <person name="Mueller W.H."/>
            <person name="Verkleij A.J."/>
            <person name="Van Den Ende H."/>
            <person name="Henrissat B."/>
            <person name="Klis F.M."/>
        </authorList>
    </citation>
    <scope>FUNCTION</scope>
</reference>
<reference key="7">
    <citation type="journal article" date="2002" name="Yeast">
        <title>Actin patch assembly proteins Las17p and Sla1p restrict cell wall growth to daughter cells and interact with cis-Golgi protein Kre6p.</title>
        <authorList>
            <person name="Li H."/>
            <person name="Page N."/>
            <person name="Bussey H."/>
        </authorList>
    </citation>
    <scope>FUNCTION</scope>
    <scope>SUBCELLULAR LOCATION</scope>
    <scope>INTERACTION WITH LAS17 AND SLA1</scope>
</reference>
<reference key="8">
    <citation type="journal article" date="2003" name="Nature">
        <title>Global analysis of protein expression in yeast.</title>
        <authorList>
            <person name="Ghaemmaghami S."/>
            <person name="Huh W.-K."/>
            <person name="Bower K."/>
            <person name="Howson R.W."/>
            <person name="Belle A."/>
            <person name="Dephoure N."/>
            <person name="O'Shea E.K."/>
            <person name="Weissman J.S."/>
        </authorList>
    </citation>
    <scope>LEVEL OF PROTEIN EXPRESSION [LARGE SCALE ANALYSIS]</scope>
</reference>
<reference key="9">
    <citation type="journal article" date="2004" name="FEMS Yeast Res.">
        <title>Incorporation of Sed1p into the cell wall of Saccharomyces cerevisiae involves KRE6.</title>
        <authorList>
            <person name="Bowen S."/>
            <person name="Wheals A.E."/>
        </authorList>
    </citation>
    <scope>FUNCTION</scope>
</reference>
<reference key="10">
    <citation type="journal article" date="2007" name="J. Biol. Chem.">
        <title>KEG1/YFR042w encodes a novel Kre6-binding endoplasmic reticulum membrane protein responsible for beta-1,6-glucan synthesis in Saccharomyces cerevisiae.</title>
        <authorList>
            <person name="Nakamata K."/>
            <person name="Kurita T."/>
            <person name="Bhuiyan M.S.A."/>
            <person name="Sato K."/>
            <person name="Noda Y."/>
            <person name="Yoda K."/>
        </authorList>
    </citation>
    <scope>INTERACTION WITH KEG1</scope>
</reference>
<reference key="11">
    <citation type="journal article" date="2007" name="J. Proteome Res.">
        <title>Large-scale phosphorylation analysis of alpha-factor-arrested Saccharomyces cerevisiae.</title>
        <authorList>
            <person name="Li X."/>
            <person name="Gerber S.A."/>
            <person name="Rudner A.D."/>
            <person name="Beausoleil S.A."/>
            <person name="Haas W."/>
            <person name="Villen J."/>
            <person name="Elias J.E."/>
            <person name="Gygi S.P."/>
        </authorList>
    </citation>
    <scope>PHOSPHORYLATION [LARGE SCALE ANALYSIS] AT SER-134</scope>
    <scope>IDENTIFICATION BY MASS SPECTROMETRY [LARGE SCALE ANALYSIS]</scope>
    <source>
        <strain>ADR376</strain>
    </source>
</reference>
<reference key="12">
    <citation type="journal article" date="2008" name="Mol. Cell. Proteomics">
        <title>A multidimensional chromatography technology for in-depth phosphoproteome analysis.</title>
        <authorList>
            <person name="Albuquerque C.P."/>
            <person name="Smolka M.B."/>
            <person name="Payne S.H."/>
            <person name="Bafna V."/>
            <person name="Eng J."/>
            <person name="Zhou H."/>
        </authorList>
    </citation>
    <scope>IDENTIFICATION BY MASS SPECTROMETRY [LARGE SCALE ANALYSIS]</scope>
</reference>
<reference key="13">
    <citation type="journal article" date="2009" name="Science">
        <title>Global analysis of Cdk1 substrate phosphorylation sites provides insights into evolution.</title>
        <authorList>
            <person name="Holt L.J."/>
            <person name="Tuch B.B."/>
            <person name="Villen J."/>
            <person name="Johnson A.D."/>
            <person name="Gygi S.P."/>
            <person name="Morgan D.O."/>
        </authorList>
    </citation>
    <scope>PHOSPHORYLATION [LARGE SCALE ANALYSIS] AT SER-81; SER-116; SER-133; SER-134; SER-136 AND SER-139</scope>
    <scope>IDENTIFICATION BY MASS SPECTROMETRY [LARGE SCALE ANALYSIS]</scope>
</reference>
<gene>
    <name type="primary">KRE6</name>
    <name type="synonym">CWH48</name>
    <name type="ordered locus">YPR159W</name>
</gene>
<evidence type="ECO:0000255" key="1"/>
<evidence type="ECO:0000255" key="2">
    <source>
        <dbReference type="PROSITE-ProRule" id="PRU01098"/>
    </source>
</evidence>
<evidence type="ECO:0000256" key="3">
    <source>
        <dbReference type="SAM" id="MobiDB-lite"/>
    </source>
</evidence>
<evidence type="ECO:0000269" key="4">
    <source>
    </source>
</evidence>
<evidence type="ECO:0000269" key="5">
    <source>
    </source>
</evidence>
<evidence type="ECO:0000269" key="6">
    <source>
    </source>
</evidence>
<evidence type="ECO:0000269" key="7">
    <source>
    </source>
</evidence>
<evidence type="ECO:0000269" key="8">
    <source>
    </source>
</evidence>
<evidence type="ECO:0000305" key="9"/>
<evidence type="ECO:0007744" key="10">
    <source>
    </source>
</evidence>
<evidence type="ECO:0007744" key="11">
    <source>
    </source>
</evidence>
<name>KRE6_YEAST</name>
<feature type="chain" id="PRO_0000084331" description="Beta-glucan synthesis-associated protein KRE6">
    <location>
        <begin position="1"/>
        <end position="720"/>
    </location>
</feature>
<feature type="topological domain" description="Cytoplasmic" evidence="1">
    <location>
        <begin position="1"/>
        <end position="252"/>
    </location>
</feature>
<feature type="transmembrane region" description="Helical; Signal-anchor for type II membrane protein" evidence="1">
    <location>
        <begin position="253"/>
        <end position="273"/>
    </location>
</feature>
<feature type="topological domain" description="Lumenal" evidence="1">
    <location>
        <begin position="274"/>
        <end position="720"/>
    </location>
</feature>
<feature type="domain" description="GH16" evidence="2">
    <location>
        <begin position="289"/>
        <end position="664"/>
    </location>
</feature>
<feature type="region of interest" description="Disordered" evidence="3">
    <location>
        <begin position="1"/>
        <end position="90"/>
    </location>
</feature>
<feature type="region of interest" description="Disordered" evidence="3">
    <location>
        <begin position="117"/>
        <end position="142"/>
    </location>
</feature>
<feature type="region of interest" description="Disordered" evidence="3">
    <location>
        <begin position="167"/>
        <end position="189"/>
    </location>
</feature>
<feature type="compositionally biased region" description="Polar residues" evidence="3">
    <location>
        <begin position="1"/>
        <end position="17"/>
    </location>
</feature>
<feature type="compositionally biased region" description="Polar residues" evidence="3">
    <location>
        <begin position="31"/>
        <end position="51"/>
    </location>
</feature>
<feature type="compositionally biased region" description="Polar residues" evidence="3">
    <location>
        <begin position="69"/>
        <end position="90"/>
    </location>
</feature>
<feature type="compositionally biased region" description="Low complexity" evidence="3">
    <location>
        <begin position="133"/>
        <end position="142"/>
    </location>
</feature>
<feature type="modified residue" description="Phosphoserine" evidence="11">
    <location>
        <position position="81"/>
    </location>
</feature>
<feature type="modified residue" description="Phosphoserine" evidence="11">
    <location>
        <position position="116"/>
    </location>
</feature>
<feature type="modified residue" description="Phosphoserine" evidence="11">
    <location>
        <position position="133"/>
    </location>
</feature>
<feature type="modified residue" description="Phosphoserine" evidence="10 11">
    <location>
        <position position="134"/>
    </location>
</feature>
<feature type="modified residue" description="Phosphoserine" evidence="11">
    <location>
        <position position="136"/>
    </location>
</feature>
<feature type="modified residue" description="Phosphoserine" evidence="11">
    <location>
        <position position="139"/>
    </location>
</feature>
<feature type="glycosylation site" description="N-linked (GlcNAc...) asparagine" evidence="1">
    <location>
        <position position="374"/>
    </location>
</feature>
<feature type="glycosylation site" description="N-linked (GlcNAc...) asparagine" evidence="1">
    <location>
        <position position="461"/>
    </location>
</feature>
<feature type="glycosylation site" description="N-linked (GlcNAc...) asparagine" evidence="1">
    <location>
        <position position="538"/>
    </location>
</feature>
<feature type="glycosylation site" description="N-linked (GlcNAc...) asparagine" evidence="1">
    <location>
        <position position="563"/>
    </location>
</feature>
<feature type="glycosylation site" description="N-linked (GlcNAc...) asparagine" evidence="1">
    <location>
        <position position="691"/>
    </location>
</feature>
<feature type="sequence conflict" description="In Ref. 1; AAA34726 and 2; AAB59312." evidence="9" ref="1 2">
    <original>D</original>
    <variation>E</variation>
    <location>
        <position position="310"/>
    </location>
</feature>
<feature type="sequence conflict" description="In Ref. 1; AAA34726 and 2; AAB59312." evidence="9" ref="1 2">
    <original>G</original>
    <variation>V</variation>
    <location>
        <position position="483"/>
    </location>
</feature>
<protein>
    <recommendedName>
        <fullName>Beta-glucan synthesis-associated protein KRE6</fullName>
    </recommendedName>
    <alternativeName>
        <fullName>Killer toxin-resistance protein 6</fullName>
    </alternativeName>
</protein>